<keyword id="KW-1185">Reference proteome</keyword>
<proteinExistence type="predicted"/>
<accession>P19282</accession>
<organism>
    <name type="scientific">Thermoproteus tenax virus 1 (strain KRA1)</name>
    <name type="common">TTV1</name>
    <dbReference type="NCBI Taxonomy" id="10480"/>
    <lineage>
        <taxon>Viruses</taxon>
        <taxon>Adnaviria</taxon>
        <taxon>Zilligvirae</taxon>
        <taxon>Taleaviricota</taxon>
        <taxon>Tokiviricetes</taxon>
        <taxon>Primavirales</taxon>
        <taxon>Tristromaviridae</taxon>
        <taxon>Betatristromavirus</taxon>
        <taxon>Betatristromavirus TTV1</taxon>
    </lineage>
</organism>
<name>YOR7_TTV1K</name>
<protein>
    <recommendedName>
        <fullName>Uncharacterized 6.5 kDa protein</fullName>
    </recommendedName>
</protein>
<dbReference type="EMBL" id="X14855">
    <property type="protein sequence ID" value="CAA32976.1"/>
    <property type="molecule type" value="Genomic_DNA"/>
</dbReference>
<dbReference type="Proteomes" id="UP000009250">
    <property type="component" value="Genome"/>
</dbReference>
<reference key="1">
    <citation type="submission" date="1989-03" db="EMBL/GenBank/DDBJ databases">
        <authorList>
            <person name="Neumann H."/>
        </authorList>
    </citation>
    <scope>NUCLEOTIDE SEQUENCE [GENOMIC DNA]</scope>
</reference>
<feature type="chain" id="PRO_0000222964" description="Uncharacterized 6.5 kDa protein">
    <location>
        <begin position="1"/>
        <end position="56"/>
    </location>
</feature>
<organismHost>
    <name type="scientific">Thermoproteus tenax</name>
    <dbReference type="NCBI Taxonomy" id="2271"/>
</organismHost>
<sequence length="56" mass="6532">MEKLWRRGIEEYGVTYANLKLNVIINCYEGERSHRDTGNHNIHCSSAKPYSLLCFT</sequence>